<gene>
    <name evidence="1" type="primary">rpsC</name>
    <name type="ordered locus">Spro_4538</name>
</gene>
<organism>
    <name type="scientific">Serratia proteamaculans (strain 568)</name>
    <dbReference type="NCBI Taxonomy" id="399741"/>
    <lineage>
        <taxon>Bacteria</taxon>
        <taxon>Pseudomonadati</taxon>
        <taxon>Pseudomonadota</taxon>
        <taxon>Gammaproteobacteria</taxon>
        <taxon>Enterobacterales</taxon>
        <taxon>Yersiniaceae</taxon>
        <taxon>Serratia</taxon>
    </lineage>
</organism>
<sequence>MGQKVHPNGIRLGIVKPWNSTWYANTKEFADNLDSDFKVRQFLIKELAKASVSRIVIERPAKSIRVTIHTARPGIVIGKKGEDVEKLRKVVANIAGVPAQINIAEVRKPELDAKLVADSITSQLERRVMFRRAMKRAVQNAMRLGAKGIKVEVSGRLGGAEIARTEWYREGRVPLHTLRADIDYNTSEAHTTYGVIGVKVWIFKGEILGGMAAVEQPEPAAQPKKQQRKGRK</sequence>
<accession>A8GKJ1</accession>
<keyword id="KW-0687">Ribonucleoprotein</keyword>
<keyword id="KW-0689">Ribosomal protein</keyword>
<keyword id="KW-0694">RNA-binding</keyword>
<keyword id="KW-0699">rRNA-binding</keyword>
<protein>
    <recommendedName>
        <fullName evidence="1">Small ribosomal subunit protein uS3</fullName>
    </recommendedName>
    <alternativeName>
        <fullName evidence="2">30S ribosomal protein S3</fullName>
    </alternativeName>
</protein>
<reference key="1">
    <citation type="submission" date="2007-09" db="EMBL/GenBank/DDBJ databases">
        <title>Complete sequence of chromosome of Serratia proteamaculans 568.</title>
        <authorList>
            <consortium name="US DOE Joint Genome Institute"/>
            <person name="Copeland A."/>
            <person name="Lucas S."/>
            <person name="Lapidus A."/>
            <person name="Barry K."/>
            <person name="Glavina del Rio T."/>
            <person name="Dalin E."/>
            <person name="Tice H."/>
            <person name="Pitluck S."/>
            <person name="Chain P."/>
            <person name="Malfatti S."/>
            <person name="Shin M."/>
            <person name="Vergez L."/>
            <person name="Schmutz J."/>
            <person name="Larimer F."/>
            <person name="Land M."/>
            <person name="Hauser L."/>
            <person name="Kyrpides N."/>
            <person name="Kim E."/>
            <person name="Taghavi S."/>
            <person name="Newman L."/>
            <person name="Vangronsveld J."/>
            <person name="van der Lelie D."/>
            <person name="Richardson P."/>
        </authorList>
    </citation>
    <scope>NUCLEOTIDE SEQUENCE [LARGE SCALE GENOMIC DNA]</scope>
    <source>
        <strain>568</strain>
    </source>
</reference>
<name>RS3_SERP5</name>
<dbReference type="EMBL" id="CP000826">
    <property type="protein sequence ID" value="ABV43631.1"/>
    <property type="molecule type" value="Genomic_DNA"/>
</dbReference>
<dbReference type="SMR" id="A8GKJ1"/>
<dbReference type="STRING" id="399741.Spro_4538"/>
<dbReference type="KEGG" id="spe:Spro_4538"/>
<dbReference type="eggNOG" id="COG0092">
    <property type="taxonomic scope" value="Bacteria"/>
</dbReference>
<dbReference type="HOGENOM" id="CLU_058591_0_2_6"/>
<dbReference type="OrthoDB" id="9806396at2"/>
<dbReference type="GO" id="GO:0022627">
    <property type="term" value="C:cytosolic small ribosomal subunit"/>
    <property type="evidence" value="ECO:0007669"/>
    <property type="project" value="TreeGrafter"/>
</dbReference>
<dbReference type="GO" id="GO:0003729">
    <property type="term" value="F:mRNA binding"/>
    <property type="evidence" value="ECO:0007669"/>
    <property type="project" value="UniProtKB-UniRule"/>
</dbReference>
<dbReference type="GO" id="GO:0019843">
    <property type="term" value="F:rRNA binding"/>
    <property type="evidence" value="ECO:0007669"/>
    <property type="project" value="UniProtKB-UniRule"/>
</dbReference>
<dbReference type="GO" id="GO:0003735">
    <property type="term" value="F:structural constituent of ribosome"/>
    <property type="evidence" value="ECO:0007669"/>
    <property type="project" value="InterPro"/>
</dbReference>
<dbReference type="GO" id="GO:0006412">
    <property type="term" value="P:translation"/>
    <property type="evidence" value="ECO:0007669"/>
    <property type="project" value="UniProtKB-UniRule"/>
</dbReference>
<dbReference type="CDD" id="cd02412">
    <property type="entry name" value="KH-II_30S_S3"/>
    <property type="match status" value="1"/>
</dbReference>
<dbReference type="FunFam" id="3.30.1140.32:FF:000001">
    <property type="entry name" value="30S ribosomal protein S3"/>
    <property type="match status" value="1"/>
</dbReference>
<dbReference type="FunFam" id="3.30.300.20:FF:000001">
    <property type="entry name" value="30S ribosomal protein S3"/>
    <property type="match status" value="1"/>
</dbReference>
<dbReference type="Gene3D" id="3.30.300.20">
    <property type="match status" value="1"/>
</dbReference>
<dbReference type="Gene3D" id="3.30.1140.32">
    <property type="entry name" value="Ribosomal protein S3, C-terminal domain"/>
    <property type="match status" value="1"/>
</dbReference>
<dbReference type="HAMAP" id="MF_01309_B">
    <property type="entry name" value="Ribosomal_uS3_B"/>
    <property type="match status" value="1"/>
</dbReference>
<dbReference type="InterPro" id="IPR004087">
    <property type="entry name" value="KH_dom"/>
</dbReference>
<dbReference type="InterPro" id="IPR015946">
    <property type="entry name" value="KH_dom-like_a/b"/>
</dbReference>
<dbReference type="InterPro" id="IPR004044">
    <property type="entry name" value="KH_dom_type_2"/>
</dbReference>
<dbReference type="InterPro" id="IPR009019">
    <property type="entry name" value="KH_sf_prok-type"/>
</dbReference>
<dbReference type="InterPro" id="IPR036419">
    <property type="entry name" value="Ribosomal_S3_C_sf"/>
</dbReference>
<dbReference type="InterPro" id="IPR005704">
    <property type="entry name" value="Ribosomal_uS3_bac-typ"/>
</dbReference>
<dbReference type="InterPro" id="IPR001351">
    <property type="entry name" value="Ribosomal_uS3_C"/>
</dbReference>
<dbReference type="InterPro" id="IPR018280">
    <property type="entry name" value="Ribosomal_uS3_CS"/>
</dbReference>
<dbReference type="NCBIfam" id="TIGR01009">
    <property type="entry name" value="rpsC_bact"/>
    <property type="match status" value="1"/>
</dbReference>
<dbReference type="PANTHER" id="PTHR11760">
    <property type="entry name" value="30S/40S RIBOSOMAL PROTEIN S3"/>
    <property type="match status" value="1"/>
</dbReference>
<dbReference type="PANTHER" id="PTHR11760:SF19">
    <property type="entry name" value="SMALL RIBOSOMAL SUBUNIT PROTEIN US3C"/>
    <property type="match status" value="1"/>
</dbReference>
<dbReference type="Pfam" id="PF07650">
    <property type="entry name" value="KH_2"/>
    <property type="match status" value="1"/>
</dbReference>
<dbReference type="Pfam" id="PF00189">
    <property type="entry name" value="Ribosomal_S3_C"/>
    <property type="match status" value="1"/>
</dbReference>
<dbReference type="SMART" id="SM00322">
    <property type="entry name" value="KH"/>
    <property type="match status" value="1"/>
</dbReference>
<dbReference type="SUPFAM" id="SSF54814">
    <property type="entry name" value="Prokaryotic type KH domain (KH-domain type II)"/>
    <property type="match status" value="1"/>
</dbReference>
<dbReference type="SUPFAM" id="SSF54821">
    <property type="entry name" value="Ribosomal protein S3 C-terminal domain"/>
    <property type="match status" value="1"/>
</dbReference>
<dbReference type="PROSITE" id="PS50823">
    <property type="entry name" value="KH_TYPE_2"/>
    <property type="match status" value="1"/>
</dbReference>
<dbReference type="PROSITE" id="PS00548">
    <property type="entry name" value="RIBOSOMAL_S3"/>
    <property type="match status" value="1"/>
</dbReference>
<evidence type="ECO:0000255" key="1">
    <source>
        <dbReference type="HAMAP-Rule" id="MF_01309"/>
    </source>
</evidence>
<evidence type="ECO:0000305" key="2"/>
<comment type="function">
    <text evidence="1">Binds the lower part of the 30S subunit head. Binds mRNA in the 70S ribosome, positioning it for translation.</text>
</comment>
<comment type="subunit">
    <text evidence="1">Part of the 30S ribosomal subunit. Forms a tight complex with proteins S10 and S14.</text>
</comment>
<comment type="similarity">
    <text evidence="1">Belongs to the universal ribosomal protein uS3 family.</text>
</comment>
<feature type="chain" id="PRO_0000323305" description="Small ribosomal subunit protein uS3">
    <location>
        <begin position="1"/>
        <end position="232"/>
    </location>
</feature>
<feature type="domain" description="KH type-2" evidence="1">
    <location>
        <begin position="39"/>
        <end position="107"/>
    </location>
</feature>
<proteinExistence type="inferred from homology"/>